<gene>
    <name type="primary">psmA1</name>
    <name type="ordered locus">USA300HOU_0456</name>
</gene>
<reference key="1">
    <citation type="journal article" date="2007" name="BMC Microbiol.">
        <title>Subtle genetic changes enhance virulence of methicillin resistant and sensitive Staphylococcus aureus.</title>
        <authorList>
            <person name="Highlander S.K."/>
            <person name="Hulten K.G."/>
            <person name="Qin X."/>
            <person name="Jiang H."/>
            <person name="Yerrapragada S."/>
            <person name="Mason E.O. Jr."/>
            <person name="Shang Y."/>
            <person name="Williams T.M."/>
            <person name="Fortunov R.M."/>
            <person name="Liu Y."/>
            <person name="Igboeli O."/>
            <person name="Petrosino J."/>
            <person name="Tirumalai M."/>
            <person name="Uzman A."/>
            <person name="Fox G.E."/>
            <person name="Cardenas A.M."/>
            <person name="Muzny D.M."/>
            <person name="Hemphill L."/>
            <person name="Ding Y."/>
            <person name="Dugan S."/>
            <person name="Blyth P.R."/>
            <person name="Buhay C.J."/>
            <person name="Dinh H.H."/>
            <person name="Hawes A.C."/>
            <person name="Holder M."/>
            <person name="Kovar C.L."/>
            <person name="Lee S.L."/>
            <person name="Liu W."/>
            <person name="Nazareth L.V."/>
            <person name="Wang Q."/>
            <person name="Zhou J."/>
            <person name="Kaplan S.L."/>
            <person name="Weinstock G.M."/>
        </authorList>
    </citation>
    <scope>NUCLEOTIDE SEQUENCE [LARGE SCALE GENOMIC DNA]</scope>
    <source>
        <strain>USA300 / TCH1516</strain>
    </source>
</reference>
<feature type="peptide" id="PRO_0000345041" description="Phenol-soluble modulin alpha 1 peptide">
    <location>
        <begin position="1"/>
        <end position="21"/>
    </location>
</feature>
<dbReference type="EMBL" id="CP000730">
    <property type="protein sequence ID" value="ABX28482.1"/>
    <property type="molecule type" value="Genomic_DNA"/>
</dbReference>
<dbReference type="SMR" id="A8Z0V1"/>
<dbReference type="KEGG" id="sax:USA300HOU_0456"/>
<dbReference type="HOGENOM" id="CLU_222042_0_0_9"/>
<dbReference type="GO" id="GO:0031640">
    <property type="term" value="P:killing of cells of another organism"/>
    <property type="evidence" value="ECO:0007669"/>
    <property type="project" value="UniProtKB-KW"/>
</dbReference>
<dbReference type="InterPro" id="IPR031429">
    <property type="entry name" value="PSM_alpha"/>
</dbReference>
<dbReference type="NCBIfam" id="NF033425">
    <property type="entry name" value="PSM_alpha_1_2"/>
    <property type="match status" value="1"/>
</dbReference>
<dbReference type="Pfam" id="PF17063">
    <property type="entry name" value="PSMalpha"/>
    <property type="match status" value="1"/>
</dbReference>
<evidence type="ECO:0000250" key="1">
    <source>
        <dbReference type="UniProtKB" id="A9JX05"/>
    </source>
</evidence>
<evidence type="ECO:0000305" key="2"/>
<name>PSMA1_STAAT</name>
<keyword id="KW-0204">Cytolysis</keyword>
<keyword id="KW-0843">Virulence</keyword>
<accession>A8Z0V1</accession>
<organism>
    <name type="scientific">Staphylococcus aureus (strain USA300 / TCH1516)</name>
    <dbReference type="NCBI Taxonomy" id="451516"/>
    <lineage>
        <taxon>Bacteria</taxon>
        <taxon>Bacillati</taxon>
        <taxon>Bacillota</taxon>
        <taxon>Bacilli</taxon>
        <taxon>Bacillales</taxon>
        <taxon>Staphylococcaceae</taxon>
        <taxon>Staphylococcus</taxon>
    </lineage>
</organism>
<comment type="function">
    <text evidence="1">Peptide which can recruit, activate and subsequently lyse human neutrophils, thus eliminating the main cellular defense against infection.</text>
</comment>
<comment type="similarity">
    <text evidence="2">Belongs to the phenol-soluble modulin alpha peptides family.</text>
</comment>
<sequence>MGIIAGIIKVIKSLIEQFTGK</sequence>
<proteinExistence type="inferred from homology"/>
<protein>
    <recommendedName>
        <fullName>Phenol-soluble modulin alpha 1 peptide</fullName>
    </recommendedName>
</protein>